<comment type="function">
    <text>Inhibitor of the extracellular proteases A, B, and C of E.chrysanthemi and the S.marcescens 50 kDa extracellular protease. It forms a non-covalent bond with the proteases and may prevent autocatalytic cleavage of the proteases zymogen in the periplasm.</text>
</comment>
<comment type="subunit">
    <text evidence="2">Monomer.</text>
</comment>
<comment type="subcellular location">
    <subcellularLocation>
        <location>Periplasm</location>
    </subcellularLocation>
</comment>
<comment type="similarity">
    <text evidence="3">Belongs to the protease inhibitor I38 family.</text>
</comment>
<name>INH_DICCH</name>
<proteinExistence type="evidence at protein level"/>
<protein>
    <recommendedName>
        <fullName>Proteinase inhibitor</fullName>
    </recommendedName>
</protein>
<reference key="1">
    <citation type="journal article" date="1989" name="Mol. Microbiol.">
        <title>Characterization of a protein inhibitor of extracellular proteases produced by Erwinia chrysanthemi.</title>
        <authorList>
            <person name="Letoffe S."/>
            <person name="Delepelaire P."/>
            <person name="Wandersman C."/>
        </authorList>
    </citation>
    <scope>NUCLEOTIDE SEQUENCE [GENOMIC DNA]</scope>
    <scope>PROTEIN SEQUENCE OF 20-26</scope>
    <source>
        <strain>B374</strain>
    </source>
</reference>
<reference key="2">
    <citation type="journal article" date="1990" name="EMBO J.">
        <title>Protease secretion by Erwinia chrysanthemi: the specific secretion functions are analogous to those of Escherichia coli alpha-haemolysin.</title>
        <authorList>
            <person name="Letoffe S."/>
            <person name="Delepelaire P."/>
            <person name="Wandersman C."/>
        </authorList>
    </citation>
    <scope>NUCLEOTIDE SEQUENCE [GENOMIC DNA]</scope>
    <scope>SEQUENCE REVISION</scope>
</reference>
<reference key="3">
    <citation type="journal article" date="1995" name="J. Mol. Biol.">
        <title>Crystal structure of a complex between Serratia marcescens metallo-protease and an inhibitor from Erwinia chrysanthemi.</title>
        <authorList>
            <person name="Baumann U."/>
            <person name="Bauer M."/>
            <person name="Letoffe S."/>
            <person name="Delepelaire P."/>
            <person name="Wandersman C."/>
        </authorList>
    </citation>
    <scope>X-RAY CRYSTALLOGRAPHY (2.3 ANGSTROMS) IN COMPLEX WITH PROTEASE</scope>
    <source>
        <strain>B374</strain>
    </source>
</reference>
<accession>P18958</accession>
<accession>Q47301</accession>
<keyword id="KW-0002">3D-structure</keyword>
<keyword id="KW-0903">Direct protein sequencing</keyword>
<keyword id="KW-1015">Disulfide bond</keyword>
<keyword id="KW-0481">Metalloenzyme inhibitor</keyword>
<keyword id="KW-0483">Metalloprotease inhibitor</keyword>
<keyword id="KW-0574">Periplasm</keyword>
<keyword id="KW-0646">Protease inhibitor</keyword>
<keyword id="KW-0732">Signal</keyword>
<evidence type="ECO:0000269" key="1">
    <source>
    </source>
</evidence>
<evidence type="ECO:0000269" key="2">
    <source>
    </source>
</evidence>
<evidence type="ECO:0000305" key="3"/>
<evidence type="ECO:0007829" key="4">
    <source>
        <dbReference type="PDB" id="1SMP"/>
    </source>
</evidence>
<sequence length="120" mass="12909">MKQLIIATLLSALSGGCMASSLRLPSAAELSGQWVLSGAEQHCDIRLNTDVLDGTTWKLAGDTACLQKLLPEAPVGWRPTPDGLTLTQADGSAVAFFSRNRDRYEHKLVDGSVRTLKKKA</sequence>
<dbReference type="EMBL" id="M60395">
    <property type="protein sequence ID" value="AAA63633.1"/>
    <property type="molecule type" value="Genomic_DNA"/>
</dbReference>
<dbReference type="EMBL" id="X53253">
    <property type="protein sequence ID" value="CAA37341.1"/>
    <property type="molecule type" value="Genomic_DNA"/>
</dbReference>
<dbReference type="EMBL" id="X14738">
    <property type="protein sequence ID" value="CAA32868.1"/>
    <property type="status" value="ALT_SEQ"/>
    <property type="molecule type" value="Genomic_DNA"/>
</dbReference>
<dbReference type="PIR" id="S12524">
    <property type="entry name" value="S12524"/>
</dbReference>
<dbReference type="PDB" id="1SMP">
    <property type="method" value="X-ray"/>
    <property type="resolution" value="2.30 A"/>
    <property type="chains" value="I=20-120"/>
</dbReference>
<dbReference type="PDBsum" id="1SMP"/>
<dbReference type="SMR" id="P18958"/>
<dbReference type="MINT" id="P18958"/>
<dbReference type="MEROPS" id="I38.001"/>
<dbReference type="EvolutionaryTrace" id="P18958"/>
<dbReference type="GO" id="GO:0042597">
    <property type="term" value="C:periplasmic space"/>
    <property type="evidence" value="ECO:0007669"/>
    <property type="project" value="UniProtKB-SubCell"/>
</dbReference>
<dbReference type="GO" id="GO:0008191">
    <property type="term" value="F:metalloendopeptidase inhibitor activity"/>
    <property type="evidence" value="ECO:0007669"/>
    <property type="project" value="InterPro"/>
</dbReference>
<dbReference type="Gene3D" id="2.40.128.10">
    <property type="match status" value="1"/>
</dbReference>
<dbReference type="InterPro" id="IPR022815">
    <property type="entry name" value="Inh"/>
</dbReference>
<dbReference type="InterPro" id="IPR021140">
    <property type="entry name" value="Inh/Omp19"/>
</dbReference>
<dbReference type="InterPro" id="IPR016085">
    <property type="entry name" value="Protease_inh_b-brl_dom"/>
</dbReference>
<dbReference type="Pfam" id="PF02974">
    <property type="entry name" value="Inh"/>
    <property type="match status" value="1"/>
</dbReference>
<dbReference type="PRINTS" id="PR01274">
    <property type="entry name" value="MPTASEINHBTR"/>
</dbReference>
<dbReference type="SUPFAM" id="SSF50882">
    <property type="entry name" value="beta-Barrel protease inhibitors"/>
    <property type="match status" value="1"/>
</dbReference>
<feature type="signal peptide" evidence="1">
    <location>
        <begin position="1"/>
        <end position="19"/>
    </location>
</feature>
<feature type="chain" id="PRO_0000026714" description="Proteinase inhibitor">
    <location>
        <begin position="20"/>
        <end position="120"/>
    </location>
</feature>
<feature type="disulfide bond">
    <location>
        <begin position="43"/>
        <end position="65"/>
    </location>
</feature>
<feature type="helix" evidence="4">
    <location>
        <begin position="27"/>
        <end position="30"/>
    </location>
</feature>
<feature type="strand" evidence="4">
    <location>
        <begin position="32"/>
        <end position="37"/>
    </location>
</feature>
<feature type="strand" evidence="4">
    <location>
        <begin position="42"/>
        <end position="53"/>
    </location>
</feature>
<feature type="strand" evidence="4">
    <location>
        <begin position="56"/>
        <end position="61"/>
    </location>
</feature>
<feature type="helix" evidence="4">
    <location>
        <begin position="63"/>
        <end position="69"/>
    </location>
</feature>
<feature type="strand" evidence="4">
    <location>
        <begin position="70"/>
        <end position="72"/>
    </location>
</feature>
<feature type="strand" evidence="4">
    <location>
        <begin position="76"/>
        <end position="79"/>
    </location>
</feature>
<feature type="strand" evidence="4">
    <location>
        <begin position="81"/>
        <end position="87"/>
    </location>
</feature>
<feature type="strand" evidence="4">
    <location>
        <begin position="93"/>
        <end position="100"/>
    </location>
</feature>
<feature type="strand" evidence="4">
    <location>
        <begin position="103"/>
        <end position="107"/>
    </location>
</feature>
<feature type="strand" evidence="4">
    <location>
        <begin position="113"/>
        <end position="118"/>
    </location>
</feature>
<gene>
    <name type="primary">inh</name>
</gene>
<organism>
    <name type="scientific">Dickeya chrysanthemi</name>
    <name type="common">Pectobacterium chrysanthemi</name>
    <name type="synonym">Erwinia chrysanthemi</name>
    <dbReference type="NCBI Taxonomy" id="556"/>
    <lineage>
        <taxon>Bacteria</taxon>
        <taxon>Pseudomonadati</taxon>
        <taxon>Pseudomonadota</taxon>
        <taxon>Gammaproteobacteria</taxon>
        <taxon>Enterobacterales</taxon>
        <taxon>Pectobacteriaceae</taxon>
        <taxon>Dickeya</taxon>
    </lineage>
</organism>